<organism>
    <name type="scientific">Bombina maxima</name>
    <name type="common">Giant fire-bellied toad</name>
    <name type="synonym">Chinese red belly toad</name>
    <dbReference type="NCBI Taxonomy" id="161274"/>
    <lineage>
        <taxon>Eukaryota</taxon>
        <taxon>Metazoa</taxon>
        <taxon>Chordata</taxon>
        <taxon>Craniata</taxon>
        <taxon>Vertebrata</taxon>
        <taxon>Euteleostomi</taxon>
        <taxon>Amphibia</taxon>
        <taxon>Batrachia</taxon>
        <taxon>Anura</taxon>
        <taxon>Bombinatoridae</taxon>
        <taxon>Bombina</taxon>
    </lineage>
</organism>
<dbReference type="EMBL" id="AJ440235">
    <property type="protein sequence ID" value="CAD29345.1"/>
    <property type="molecule type" value="mRNA"/>
</dbReference>
<dbReference type="SMR" id="Q8JFX8"/>
<dbReference type="GO" id="GO:0005576">
    <property type="term" value="C:extracellular region"/>
    <property type="evidence" value="ECO:0007669"/>
    <property type="project" value="UniProtKB-SubCell"/>
</dbReference>
<dbReference type="GO" id="GO:0090729">
    <property type="term" value="F:toxin activity"/>
    <property type="evidence" value="ECO:0007669"/>
    <property type="project" value="UniProtKB-KW"/>
</dbReference>
<dbReference type="GO" id="GO:0001935">
    <property type="term" value="P:endothelial cell proliferation"/>
    <property type="evidence" value="ECO:0007669"/>
    <property type="project" value="TreeGrafter"/>
</dbReference>
<dbReference type="Gene3D" id="2.10.80.10">
    <property type="entry name" value="Lipase, subunit A"/>
    <property type="match status" value="1"/>
</dbReference>
<dbReference type="InterPro" id="IPR009523">
    <property type="entry name" value="Prokineticin"/>
</dbReference>
<dbReference type="InterPro" id="IPR023569">
    <property type="entry name" value="Prokineticin_domain"/>
</dbReference>
<dbReference type="PANTHER" id="PTHR18821:SF2">
    <property type="entry name" value="DICKKOPF-RELATED PROTEIN 3-LIKE"/>
    <property type="match status" value="1"/>
</dbReference>
<dbReference type="PANTHER" id="PTHR18821">
    <property type="entry name" value="PROKINETICIN"/>
    <property type="match status" value="1"/>
</dbReference>
<dbReference type="Pfam" id="PF06607">
    <property type="entry name" value="Prokineticin"/>
    <property type="match status" value="1"/>
</dbReference>
<dbReference type="SUPFAM" id="SSF57190">
    <property type="entry name" value="Colipase-like"/>
    <property type="match status" value="2"/>
</dbReference>
<evidence type="ECO:0000250" key="1">
    <source>
        <dbReference type="UniProtKB" id="Q9PW66"/>
    </source>
</evidence>
<evidence type="ECO:0000305" key="2"/>
<feature type="signal peptide" evidence="1">
    <location>
        <begin position="1"/>
        <end position="19"/>
    </location>
</feature>
<feature type="chain" id="PRO_0000265777" description="Prokineticin Bm8-f">
    <location>
        <begin position="20"/>
        <end position="96"/>
    </location>
</feature>
<feature type="disulfide bond" evidence="1">
    <location>
        <begin position="26"/>
        <end position="38"/>
    </location>
</feature>
<feature type="disulfide bond" evidence="1">
    <location>
        <begin position="32"/>
        <end position="50"/>
    </location>
</feature>
<feature type="disulfide bond" evidence="1">
    <location>
        <begin position="37"/>
        <end position="78"/>
    </location>
</feature>
<feature type="disulfide bond" evidence="1">
    <location>
        <begin position="60"/>
        <end position="86"/>
    </location>
</feature>
<feature type="disulfide bond" evidence="1">
    <location>
        <begin position="80"/>
        <end position="95"/>
    </location>
</feature>
<name>BM8F_BOMMX</name>
<proteinExistence type="evidence at transcript level"/>
<sequence>MKCFAQIVVLLLVIAFSHGAVITGVCDRDAQCGSGTCCAASAFSRNIRFCVPLGNNGEECHPASHKVPSDGKRLSSLCPCNTGLTCSKSGEKYQCS</sequence>
<protein>
    <recommendedName>
        <fullName>Prokineticin Bm8-f</fullName>
    </recommendedName>
</protein>
<accession>Q8JFX8</accession>
<comment type="function">
    <text evidence="1">Potent agonist for both PKR1/PROKR1 and PKR2/PROKR2, and inducer of a potent and long-lasting hyperalgesia. Also potentiates capsaicin-induced TRPV1 current, when tested on DRG neurons. At subnanomolar concentrations, this protein both induces potent chemotaxis of macrophages and stimulates LPS-induced production of the pro-inflammatory cytokines IL-1 and IL-12. In vivo, potently stimulates the contraction of the guinea-pig gastrointestinal (GI) smooth muscle (nanomolar concentration).</text>
</comment>
<comment type="subcellular location">
    <subcellularLocation>
        <location>Secreted</location>
    </subcellularLocation>
</comment>
<comment type="tissue specificity">
    <text>Expressed by the skin glands.</text>
</comment>
<comment type="similarity">
    <text evidence="2">Belongs to the AVIT (prokineticin) family.</text>
</comment>
<keyword id="KW-1015">Disulfide bond</keyword>
<keyword id="KW-1213">G-protein coupled receptor impairing toxin</keyword>
<keyword id="KW-0964">Secreted</keyword>
<keyword id="KW-0732">Signal</keyword>
<keyword id="KW-0800">Toxin</keyword>
<reference key="1">
    <citation type="journal article" date="2003" name="Biochem. J.">
        <title>Granular gland transcriptomes in stimulated amphibian skin secretions.</title>
        <authorList>
            <person name="Chen T."/>
            <person name="Farragher S.M."/>
            <person name="Bjourson A.J."/>
            <person name="Orr D.F."/>
            <person name="Rao P."/>
            <person name="Shaw C."/>
        </authorList>
    </citation>
    <scope>NUCLEOTIDE SEQUENCE [MRNA]</scope>
    <source>
        <tissue>Skin secretion</tissue>
    </source>
</reference>